<protein>
    <recommendedName>
        <fullName evidence="1">Dihydroxy-acid dehydratase</fullName>
        <shortName evidence="1">DAD</shortName>
        <ecNumber evidence="1">4.2.1.9</ecNumber>
    </recommendedName>
</protein>
<dbReference type="EC" id="4.2.1.9" evidence="1"/>
<dbReference type="EMBL" id="CP000918">
    <property type="protein sequence ID" value="ACO17641.1"/>
    <property type="molecule type" value="Genomic_DNA"/>
</dbReference>
<dbReference type="RefSeq" id="WP_000137358.1">
    <property type="nucleotide sequence ID" value="NC_012468.1"/>
</dbReference>
<dbReference type="SMR" id="C1CAX1"/>
<dbReference type="KEGG" id="snm:SP70585_2252"/>
<dbReference type="HOGENOM" id="CLU_014271_4_2_9"/>
<dbReference type="UniPathway" id="UPA00047">
    <property type="reaction ID" value="UER00057"/>
</dbReference>
<dbReference type="UniPathway" id="UPA00049">
    <property type="reaction ID" value="UER00061"/>
</dbReference>
<dbReference type="Proteomes" id="UP000002211">
    <property type="component" value="Chromosome"/>
</dbReference>
<dbReference type="GO" id="GO:0051537">
    <property type="term" value="F:2 iron, 2 sulfur cluster binding"/>
    <property type="evidence" value="ECO:0007669"/>
    <property type="project" value="UniProtKB-UniRule"/>
</dbReference>
<dbReference type="GO" id="GO:0004160">
    <property type="term" value="F:dihydroxy-acid dehydratase activity"/>
    <property type="evidence" value="ECO:0007669"/>
    <property type="project" value="UniProtKB-UniRule"/>
</dbReference>
<dbReference type="GO" id="GO:0000287">
    <property type="term" value="F:magnesium ion binding"/>
    <property type="evidence" value="ECO:0007669"/>
    <property type="project" value="UniProtKB-UniRule"/>
</dbReference>
<dbReference type="GO" id="GO:0009097">
    <property type="term" value="P:isoleucine biosynthetic process"/>
    <property type="evidence" value="ECO:0007669"/>
    <property type="project" value="UniProtKB-UniRule"/>
</dbReference>
<dbReference type="GO" id="GO:0009099">
    <property type="term" value="P:L-valine biosynthetic process"/>
    <property type="evidence" value="ECO:0007669"/>
    <property type="project" value="UniProtKB-UniRule"/>
</dbReference>
<dbReference type="FunFam" id="3.50.30.80:FF:000001">
    <property type="entry name" value="Dihydroxy-acid dehydratase"/>
    <property type="match status" value="1"/>
</dbReference>
<dbReference type="Gene3D" id="3.50.30.80">
    <property type="entry name" value="IlvD/EDD C-terminal domain-like"/>
    <property type="match status" value="1"/>
</dbReference>
<dbReference type="HAMAP" id="MF_00012">
    <property type="entry name" value="IlvD"/>
    <property type="match status" value="1"/>
</dbReference>
<dbReference type="InterPro" id="IPR050165">
    <property type="entry name" value="DHAD_IlvD/Edd"/>
</dbReference>
<dbReference type="InterPro" id="IPR042096">
    <property type="entry name" value="Dihydro-acid_dehy_C"/>
</dbReference>
<dbReference type="InterPro" id="IPR004404">
    <property type="entry name" value="DihydroxyA_deHydtase"/>
</dbReference>
<dbReference type="InterPro" id="IPR020558">
    <property type="entry name" value="DiOHA_6PGluconate_deHydtase_CS"/>
</dbReference>
<dbReference type="InterPro" id="IPR056740">
    <property type="entry name" value="ILV_EDD_C"/>
</dbReference>
<dbReference type="InterPro" id="IPR000581">
    <property type="entry name" value="ILV_EDD_N"/>
</dbReference>
<dbReference type="InterPro" id="IPR037237">
    <property type="entry name" value="IlvD/EDD_N"/>
</dbReference>
<dbReference type="NCBIfam" id="TIGR00110">
    <property type="entry name" value="ilvD"/>
    <property type="match status" value="1"/>
</dbReference>
<dbReference type="NCBIfam" id="NF002068">
    <property type="entry name" value="PRK00911.1"/>
    <property type="match status" value="1"/>
</dbReference>
<dbReference type="PANTHER" id="PTHR21000">
    <property type="entry name" value="DIHYDROXY-ACID DEHYDRATASE DAD"/>
    <property type="match status" value="1"/>
</dbReference>
<dbReference type="PANTHER" id="PTHR21000:SF5">
    <property type="entry name" value="DIHYDROXY-ACID DEHYDRATASE, MITOCHONDRIAL"/>
    <property type="match status" value="1"/>
</dbReference>
<dbReference type="Pfam" id="PF24877">
    <property type="entry name" value="ILV_EDD_C"/>
    <property type="match status" value="1"/>
</dbReference>
<dbReference type="Pfam" id="PF00920">
    <property type="entry name" value="ILVD_EDD_N"/>
    <property type="match status" value="1"/>
</dbReference>
<dbReference type="SUPFAM" id="SSF143975">
    <property type="entry name" value="IlvD/EDD N-terminal domain-like"/>
    <property type="match status" value="1"/>
</dbReference>
<dbReference type="SUPFAM" id="SSF52016">
    <property type="entry name" value="LeuD/IlvD-like"/>
    <property type="match status" value="1"/>
</dbReference>
<dbReference type="PROSITE" id="PS00886">
    <property type="entry name" value="ILVD_EDD_1"/>
    <property type="match status" value="1"/>
</dbReference>
<dbReference type="PROSITE" id="PS00887">
    <property type="entry name" value="ILVD_EDD_2"/>
    <property type="match status" value="1"/>
</dbReference>
<name>ILVD_STRP7</name>
<evidence type="ECO:0000255" key="1">
    <source>
        <dbReference type="HAMAP-Rule" id="MF_00012"/>
    </source>
</evidence>
<organism>
    <name type="scientific">Streptococcus pneumoniae (strain 70585)</name>
    <dbReference type="NCBI Taxonomy" id="488221"/>
    <lineage>
        <taxon>Bacteria</taxon>
        <taxon>Bacillati</taxon>
        <taxon>Bacillota</taxon>
        <taxon>Bacilli</taxon>
        <taxon>Lactobacillales</taxon>
        <taxon>Streptococcaceae</taxon>
        <taxon>Streptococcus</taxon>
    </lineage>
</organism>
<comment type="function">
    <text evidence="1">Functions in the biosynthesis of branched-chain amino acids. Catalyzes the dehydration of (2R,3R)-2,3-dihydroxy-3-methylpentanoate (2,3-dihydroxy-3-methylvalerate) into 2-oxo-3-methylpentanoate (2-oxo-3-methylvalerate) and of (2R)-2,3-dihydroxy-3-methylbutanoate (2,3-dihydroxyisovalerate) into 2-oxo-3-methylbutanoate (2-oxoisovalerate), the penultimate precursor to L-isoleucine and L-valine, respectively.</text>
</comment>
<comment type="catalytic activity">
    <reaction evidence="1">
        <text>(2R)-2,3-dihydroxy-3-methylbutanoate = 3-methyl-2-oxobutanoate + H2O</text>
        <dbReference type="Rhea" id="RHEA:24809"/>
        <dbReference type="ChEBI" id="CHEBI:11851"/>
        <dbReference type="ChEBI" id="CHEBI:15377"/>
        <dbReference type="ChEBI" id="CHEBI:49072"/>
        <dbReference type="EC" id="4.2.1.9"/>
    </reaction>
    <physiologicalReaction direction="left-to-right" evidence="1">
        <dbReference type="Rhea" id="RHEA:24810"/>
    </physiologicalReaction>
</comment>
<comment type="catalytic activity">
    <reaction evidence="1">
        <text>(2R,3R)-2,3-dihydroxy-3-methylpentanoate = (S)-3-methyl-2-oxopentanoate + H2O</text>
        <dbReference type="Rhea" id="RHEA:27694"/>
        <dbReference type="ChEBI" id="CHEBI:15377"/>
        <dbReference type="ChEBI" id="CHEBI:35146"/>
        <dbReference type="ChEBI" id="CHEBI:49258"/>
        <dbReference type="EC" id="4.2.1.9"/>
    </reaction>
    <physiologicalReaction direction="left-to-right" evidence="1">
        <dbReference type="Rhea" id="RHEA:27695"/>
    </physiologicalReaction>
</comment>
<comment type="cofactor">
    <cofactor evidence="1">
        <name>[2Fe-2S] cluster</name>
        <dbReference type="ChEBI" id="CHEBI:190135"/>
    </cofactor>
    <text evidence="1">Binds 1 [2Fe-2S] cluster per subunit. This cluster acts as a Lewis acid cofactor.</text>
</comment>
<comment type="cofactor">
    <cofactor evidence="1">
        <name>Mg(2+)</name>
        <dbReference type="ChEBI" id="CHEBI:18420"/>
    </cofactor>
</comment>
<comment type="pathway">
    <text evidence="1">Amino-acid biosynthesis; L-isoleucine biosynthesis; L-isoleucine from 2-oxobutanoate: step 3/4.</text>
</comment>
<comment type="pathway">
    <text evidence="1">Amino-acid biosynthesis; L-valine biosynthesis; L-valine from pyruvate: step 3/4.</text>
</comment>
<comment type="subunit">
    <text evidence="1">Homodimer.</text>
</comment>
<comment type="similarity">
    <text evidence="1">Belongs to the IlvD/Edd family.</text>
</comment>
<accession>C1CAX1</accession>
<proteinExistence type="inferred from homology"/>
<keyword id="KW-0001">2Fe-2S</keyword>
<keyword id="KW-0028">Amino-acid biosynthesis</keyword>
<keyword id="KW-0100">Branched-chain amino acid biosynthesis</keyword>
<keyword id="KW-0408">Iron</keyword>
<keyword id="KW-0411">Iron-sulfur</keyword>
<keyword id="KW-0456">Lyase</keyword>
<keyword id="KW-0460">Magnesium</keyword>
<keyword id="KW-0479">Metal-binding</keyword>
<sequence length="567" mass="59859">MTELDKRHRSSIYDSMVKSPNRAMLRATGMTDKDFETSIVGVISTWAENTPCNIHLHDFGKLAKEGVKSAGAWPVQFGTITVADGIAMGTPGMRFSLTSRDIIADSIEAAMSGHNVDAFVAIGGCDKNMPGSMIAIANMDIPAIFAYGGTIAPGNLDGKDIDLVSVFEGIGKWNHGDMTAEDVKRLECNACPGPGGCGGMYTANTMATAIEVLGMSLPGSSSHPAESADKKEDIEAAGRAVVKMLELGLKPSDILTREAFEDAITVTMALGGSTNATLHLLAIAHAANVDLSLEDFNTIQERVPHLADLKPSGQYVFQDLYEVGGVPAVMKYLLANGFLHGDRITCTGKTVAENLADFADLTPGQKVIMPLENPKRADGPLIILNGNLAPDGAVAKVSGVKVRRHVGPAKVFDSEEDAIQAVLTDEIVDGDVVVVRFVGPKGGPGMPEMLSLSSMIVGKGQGDKVALLTDGRFSGGTYGLVVGHIAPEAQDGGPIAYLRTGDIVTVDQDTKEISMAVSEEELEKRKAETTLPPLYSRGVLGKYAHIVSSASRGAVTDFWNMDKSGKK</sequence>
<reference key="1">
    <citation type="journal article" date="2010" name="Genome Biol.">
        <title>Structure and dynamics of the pan-genome of Streptococcus pneumoniae and closely related species.</title>
        <authorList>
            <person name="Donati C."/>
            <person name="Hiller N.L."/>
            <person name="Tettelin H."/>
            <person name="Muzzi A."/>
            <person name="Croucher N.J."/>
            <person name="Angiuoli S.V."/>
            <person name="Oggioni M."/>
            <person name="Dunning Hotopp J.C."/>
            <person name="Hu F.Z."/>
            <person name="Riley D.R."/>
            <person name="Covacci A."/>
            <person name="Mitchell T.J."/>
            <person name="Bentley S.D."/>
            <person name="Kilian M."/>
            <person name="Ehrlich G.D."/>
            <person name="Rappuoli R."/>
            <person name="Moxon E.R."/>
            <person name="Masignani V."/>
        </authorList>
    </citation>
    <scope>NUCLEOTIDE SEQUENCE [LARGE SCALE GENOMIC DNA]</scope>
    <source>
        <strain>70585</strain>
    </source>
</reference>
<gene>
    <name evidence="1" type="primary">ilvD</name>
    <name type="ordered locus">SP70585_2252</name>
</gene>
<feature type="chain" id="PRO_1000116528" description="Dihydroxy-acid dehydratase">
    <location>
        <begin position="1"/>
        <end position="567"/>
    </location>
</feature>
<feature type="active site" description="Proton acceptor" evidence="1">
    <location>
        <position position="474"/>
    </location>
</feature>
<feature type="binding site" evidence="1">
    <location>
        <position position="52"/>
    </location>
    <ligand>
        <name>[2Fe-2S] cluster</name>
        <dbReference type="ChEBI" id="CHEBI:190135"/>
    </ligand>
</feature>
<feature type="binding site" evidence="1">
    <location>
        <position position="84"/>
    </location>
    <ligand>
        <name>Mg(2+)</name>
        <dbReference type="ChEBI" id="CHEBI:18420"/>
    </ligand>
</feature>
<feature type="binding site" evidence="1">
    <location>
        <position position="125"/>
    </location>
    <ligand>
        <name>[2Fe-2S] cluster</name>
        <dbReference type="ChEBI" id="CHEBI:190135"/>
    </ligand>
</feature>
<feature type="binding site" evidence="1">
    <location>
        <position position="126"/>
    </location>
    <ligand>
        <name>Mg(2+)</name>
        <dbReference type="ChEBI" id="CHEBI:18420"/>
    </ligand>
</feature>
<feature type="binding site" description="via carbamate group" evidence="1">
    <location>
        <position position="127"/>
    </location>
    <ligand>
        <name>Mg(2+)</name>
        <dbReference type="ChEBI" id="CHEBI:18420"/>
    </ligand>
</feature>
<feature type="binding site" evidence="1">
    <location>
        <position position="197"/>
    </location>
    <ligand>
        <name>[2Fe-2S] cluster</name>
        <dbReference type="ChEBI" id="CHEBI:190135"/>
    </ligand>
</feature>
<feature type="binding site" evidence="1">
    <location>
        <position position="448"/>
    </location>
    <ligand>
        <name>Mg(2+)</name>
        <dbReference type="ChEBI" id="CHEBI:18420"/>
    </ligand>
</feature>
<feature type="modified residue" description="N6-carboxylysine" evidence="1">
    <location>
        <position position="127"/>
    </location>
</feature>